<protein>
    <recommendedName>
        <fullName>Cu-Zn superoxide dismutase-like protein OPG175</fullName>
    </recommendedName>
</protein>
<comment type="function">
    <text evidence="2">Superoxide dismutase-like protein with no enzymatic activity.</text>
</comment>
<comment type="subcellular location">
    <subcellularLocation>
        <location evidence="2">Virion</location>
    </subcellularLocation>
    <subcellularLocation>
        <location evidence="2">Host cytoplasm</location>
    </subcellularLocation>
    <text evidence="2">Accumulates predominantly in cytoplasmic viral factories.</text>
</comment>
<comment type="similarity">
    <text evidence="3">Belongs to the Cu-Zn superoxide dismutase family.</text>
</comment>
<evidence type="ECO:0000250" key="1"/>
<evidence type="ECO:0000250" key="2">
    <source>
        <dbReference type="UniProtKB" id="P26669"/>
    </source>
</evidence>
<evidence type="ECO:0000305" key="3"/>
<organism>
    <name type="scientific">Vaccinia virus (strain Tashkent)</name>
    <name type="common">VACV</name>
    <dbReference type="NCBI Taxonomy" id="301352"/>
    <lineage>
        <taxon>Viruses</taxon>
        <taxon>Varidnaviria</taxon>
        <taxon>Bamfordvirae</taxon>
        <taxon>Nucleocytoviricota</taxon>
        <taxon>Pokkesviricetes</taxon>
        <taxon>Chitovirales</taxon>
        <taxon>Poxviridae</taxon>
        <taxon>Chordopoxvirinae</taxon>
        <taxon>Orthopoxvirus</taxon>
        <taxon>Vaccinia virus</taxon>
    </lineage>
</organism>
<name>SODL_VACCU</name>
<keyword id="KW-1015">Disulfide bond</keyword>
<keyword id="KW-1035">Host cytoplasm</keyword>
<keyword id="KW-0946">Virion</keyword>
<dbReference type="EMBL" id="AF349006">
    <property type="protein sequence ID" value="AAK76407.1"/>
    <property type="molecule type" value="Genomic_DNA"/>
</dbReference>
<dbReference type="SMR" id="Q91M95"/>
<dbReference type="GO" id="GO:0030430">
    <property type="term" value="C:host cell cytoplasm"/>
    <property type="evidence" value="ECO:0007669"/>
    <property type="project" value="UniProtKB-SubCell"/>
</dbReference>
<dbReference type="GO" id="GO:0044423">
    <property type="term" value="C:virion component"/>
    <property type="evidence" value="ECO:0007669"/>
    <property type="project" value="UniProtKB-KW"/>
</dbReference>
<dbReference type="GO" id="GO:0005507">
    <property type="term" value="F:copper ion binding"/>
    <property type="evidence" value="ECO:0007669"/>
    <property type="project" value="InterPro"/>
</dbReference>
<dbReference type="GO" id="GO:0006801">
    <property type="term" value="P:superoxide metabolic process"/>
    <property type="evidence" value="ECO:0007669"/>
    <property type="project" value="InterPro"/>
</dbReference>
<dbReference type="Gene3D" id="2.60.40.200">
    <property type="entry name" value="Superoxide dismutase, copper/zinc binding domain"/>
    <property type="match status" value="1"/>
</dbReference>
<dbReference type="InterPro" id="IPR036423">
    <property type="entry name" value="SOD-like_Cu/Zn_dom_sf"/>
</dbReference>
<dbReference type="InterPro" id="IPR024134">
    <property type="entry name" value="SOD_Cu/Zn_/chaperone"/>
</dbReference>
<dbReference type="PANTHER" id="PTHR10003">
    <property type="entry name" value="SUPEROXIDE DISMUTASE CU-ZN -RELATED"/>
    <property type="match status" value="1"/>
</dbReference>
<dbReference type="SUPFAM" id="SSF49329">
    <property type="entry name" value="Cu,Zn superoxide dismutase-like"/>
    <property type="match status" value="1"/>
</dbReference>
<accession>Q91M95</accession>
<reference key="1">
    <citation type="journal article" date="2001" name="J. Virol.">
        <title>The vaccinia virus superoxide dismutase-like protein (A45R) is a virion component that is nonessential for virus replication.</title>
        <authorList>
            <person name="Almazan F."/>
            <person name="Tscharke D.C."/>
            <person name="Smith G.L."/>
        </authorList>
    </citation>
    <scope>NUCLEOTIDE SEQUENCE [GENOMIC DNA]</scope>
</reference>
<feature type="chain" id="PRO_0000164168" description="Cu-Zn superoxide dismutase-like protein OPG175">
    <location>
        <begin position="1"/>
        <end position="120"/>
    </location>
</feature>
<feature type="disulfide bond" evidence="1">
    <location>
        <begin position="52"/>
        <end position="102"/>
    </location>
</feature>
<organismHost>
    <name type="scientific">Homo sapiens</name>
    <name type="common">Human</name>
    <dbReference type="NCBI Taxonomy" id="9606"/>
</organismHost>
<proteinExistence type="inferred from homology"/>
<gene>
    <name type="primary">OPG175</name>
    <name type="ORF">A45R</name>
</gene>
<sequence length="120" mass="13180">MAVCIIDHDNIRGVIYFEPVHGKDKVLGSVIGLKSGTYSLIIHRYGDISRGCDSIGSPEIFIGNIFVNRYGVAYVYLDTDVNISTIIGKALSISKNDQRLACGVIGISYINEKNNTFSYN</sequence>